<sequence>MPTATPATAPVTTTDVLIVGAGPVGLFAAFQAGVLGLKCELIDVLDRAGGQCTELYPEKPIYDIPAVPGCLAQDLVDRLLEQCAPFDFPMHFGQRAESVAEIPAPAASAGHAGHERLLVTTDGGKRFDVAAVLICAGAGAFAPQRVSLPEAAALEGRHVHYAVRDVSHFAGKRVIVAGGGDSALDWALALRKVAARVTLLHRREGFRAADGTVAEMRRAVAEGEMDFVVGMLGALRTEGADGGLSEVEVRTRDGSTVLPAEELVALYGLVSEPGPIAQWDLDMRAGRILVDTTTYESSRRGIFAAGDIAFYPNKQKLILSGFHEAALALRKAYHYAFPEKALVHVHTSNNAALKEKLTHA</sequence>
<reference key="1">
    <citation type="journal article" date="2008" name="Genome Res.">
        <title>Genome sequence of the beta-rhizobium Cupriavidus taiwanensis and comparative genomics of rhizobia.</title>
        <authorList>
            <person name="Amadou C."/>
            <person name="Pascal G."/>
            <person name="Mangenot S."/>
            <person name="Glew M."/>
            <person name="Bontemps C."/>
            <person name="Capela D."/>
            <person name="Carrere S."/>
            <person name="Cruveiller S."/>
            <person name="Dossat C."/>
            <person name="Lajus A."/>
            <person name="Marchetti M."/>
            <person name="Poinsot V."/>
            <person name="Rouy Z."/>
            <person name="Servin B."/>
            <person name="Saad M."/>
            <person name="Schenowitz C."/>
            <person name="Barbe V."/>
            <person name="Batut J."/>
            <person name="Medigue C."/>
            <person name="Masson-Boivin C."/>
        </authorList>
    </citation>
    <scope>NUCLEOTIDE SEQUENCE [LARGE SCALE GENOMIC DNA]</scope>
    <source>
        <strain>DSM 17343 / BCRC 17206 / CCUG 44338 / CIP 107171 / LMG 19424 / R1</strain>
    </source>
</reference>
<keyword id="KW-0274">FAD</keyword>
<keyword id="KW-0285">Flavoprotein</keyword>
<keyword id="KW-0521">NADP</keyword>
<keyword id="KW-0560">Oxidoreductase</keyword>
<comment type="catalytic activity">
    <reaction evidence="1">
        <text>2 reduced [2Fe-2S]-[ferredoxin] + NADP(+) + H(+) = 2 oxidized [2Fe-2S]-[ferredoxin] + NADPH</text>
        <dbReference type="Rhea" id="RHEA:20125"/>
        <dbReference type="Rhea" id="RHEA-COMP:10000"/>
        <dbReference type="Rhea" id="RHEA-COMP:10001"/>
        <dbReference type="ChEBI" id="CHEBI:15378"/>
        <dbReference type="ChEBI" id="CHEBI:33737"/>
        <dbReference type="ChEBI" id="CHEBI:33738"/>
        <dbReference type="ChEBI" id="CHEBI:57783"/>
        <dbReference type="ChEBI" id="CHEBI:58349"/>
        <dbReference type="EC" id="1.18.1.2"/>
    </reaction>
</comment>
<comment type="cofactor">
    <cofactor evidence="1">
        <name>FAD</name>
        <dbReference type="ChEBI" id="CHEBI:57692"/>
    </cofactor>
    <text evidence="1">Binds 1 FAD per subunit.</text>
</comment>
<comment type="subunit">
    <text evidence="1">Homodimer.</text>
</comment>
<comment type="similarity">
    <text evidence="1">Belongs to the ferredoxin--NADP reductase type 2 family.</text>
</comment>
<accession>B3R4A7</accession>
<protein>
    <recommendedName>
        <fullName evidence="1">Ferredoxin--NADP reductase 1</fullName>
        <shortName evidence="1">FNR 1</shortName>
        <shortName evidence="1">Fd-NADP(+) reductase 1</shortName>
        <ecNumber evidence="1">1.18.1.2</ecNumber>
    </recommendedName>
</protein>
<evidence type="ECO:0000255" key="1">
    <source>
        <dbReference type="HAMAP-Rule" id="MF_01685"/>
    </source>
</evidence>
<dbReference type="EC" id="1.18.1.2" evidence="1"/>
<dbReference type="EMBL" id="CU633749">
    <property type="protein sequence ID" value="CAQ69140.1"/>
    <property type="molecule type" value="Genomic_DNA"/>
</dbReference>
<dbReference type="RefSeq" id="WP_012352468.1">
    <property type="nucleotide sequence ID" value="NC_010528.1"/>
</dbReference>
<dbReference type="SMR" id="B3R4A7"/>
<dbReference type="GeneID" id="29760952"/>
<dbReference type="KEGG" id="cti:RALTA_A1176"/>
<dbReference type="eggNOG" id="COG0492">
    <property type="taxonomic scope" value="Bacteria"/>
</dbReference>
<dbReference type="HOGENOM" id="CLU_031864_5_5_4"/>
<dbReference type="BioCyc" id="CTAI977880:RALTA_RS05620-MONOMER"/>
<dbReference type="Proteomes" id="UP000001692">
    <property type="component" value="Chromosome 1"/>
</dbReference>
<dbReference type="GO" id="GO:0004324">
    <property type="term" value="F:ferredoxin-NADP+ reductase activity"/>
    <property type="evidence" value="ECO:0007669"/>
    <property type="project" value="UniProtKB-UniRule"/>
</dbReference>
<dbReference type="GO" id="GO:0050660">
    <property type="term" value="F:flavin adenine dinucleotide binding"/>
    <property type="evidence" value="ECO:0007669"/>
    <property type="project" value="UniProtKB-UniRule"/>
</dbReference>
<dbReference type="GO" id="GO:0050661">
    <property type="term" value="F:NADP binding"/>
    <property type="evidence" value="ECO:0007669"/>
    <property type="project" value="UniProtKB-UniRule"/>
</dbReference>
<dbReference type="Gene3D" id="3.50.50.60">
    <property type="entry name" value="FAD/NAD(P)-binding domain"/>
    <property type="match status" value="2"/>
</dbReference>
<dbReference type="HAMAP" id="MF_01685">
    <property type="entry name" value="FENR2"/>
    <property type="match status" value="1"/>
</dbReference>
<dbReference type="InterPro" id="IPR036188">
    <property type="entry name" value="FAD/NAD-bd_sf"/>
</dbReference>
<dbReference type="InterPro" id="IPR023753">
    <property type="entry name" value="FAD/NAD-binding_dom"/>
</dbReference>
<dbReference type="InterPro" id="IPR022890">
    <property type="entry name" value="Fd--NADP_Rdtase_type_2"/>
</dbReference>
<dbReference type="InterPro" id="IPR050097">
    <property type="entry name" value="Ferredoxin-NADP_redctase_2"/>
</dbReference>
<dbReference type="PANTHER" id="PTHR48105">
    <property type="entry name" value="THIOREDOXIN REDUCTASE 1-RELATED-RELATED"/>
    <property type="match status" value="1"/>
</dbReference>
<dbReference type="Pfam" id="PF07992">
    <property type="entry name" value="Pyr_redox_2"/>
    <property type="match status" value="1"/>
</dbReference>
<dbReference type="PRINTS" id="PR00368">
    <property type="entry name" value="FADPNR"/>
</dbReference>
<dbReference type="PRINTS" id="PR00411">
    <property type="entry name" value="PNDRDTASEI"/>
</dbReference>
<dbReference type="SUPFAM" id="SSF51905">
    <property type="entry name" value="FAD/NAD(P)-binding domain"/>
    <property type="match status" value="1"/>
</dbReference>
<organism>
    <name type="scientific">Cupriavidus taiwanensis (strain DSM 17343 / BCRC 17206 / CCUG 44338 / CIP 107171 / LMG 19424 / R1)</name>
    <name type="common">Ralstonia taiwanensis (strain LMG 19424)</name>
    <dbReference type="NCBI Taxonomy" id="977880"/>
    <lineage>
        <taxon>Bacteria</taxon>
        <taxon>Pseudomonadati</taxon>
        <taxon>Pseudomonadota</taxon>
        <taxon>Betaproteobacteria</taxon>
        <taxon>Burkholderiales</taxon>
        <taxon>Burkholderiaceae</taxon>
        <taxon>Cupriavidus</taxon>
    </lineage>
</organism>
<gene>
    <name type="ordered locus">RALTA_A1176</name>
</gene>
<feature type="chain" id="PRO_0000364825" description="Ferredoxin--NADP reductase 1">
    <location>
        <begin position="1"/>
        <end position="360"/>
    </location>
</feature>
<feature type="binding site" evidence="1">
    <location>
        <position position="43"/>
    </location>
    <ligand>
        <name>FAD</name>
        <dbReference type="ChEBI" id="CHEBI:57692"/>
    </ligand>
</feature>
<feature type="binding site" evidence="1">
    <location>
        <position position="51"/>
    </location>
    <ligand>
        <name>FAD</name>
        <dbReference type="ChEBI" id="CHEBI:57692"/>
    </ligand>
</feature>
<feature type="binding site" evidence="1">
    <location>
        <position position="56"/>
    </location>
    <ligand>
        <name>FAD</name>
        <dbReference type="ChEBI" id="CHEBI:57692"/>
    </ligand>
</feature>
<feature type="binding site" evidence="1">
    <location>
        <position position="96"/>
    </location>
    <ligand>
        <name>FAD</name>
        <dbReference type="ChEBI" id="CHEBI:57692"/>
    </ligand>
</feature>
<feature type="binding site" evidence="1">
    <location>
        <position position="141"/>
    </location>
    <ligand>
        <name>FAD</name>
        <dbReference type="ChEBI" id="CHEBI:57692"/>
    </ligand>
</feature>
<feature type="binding site" evidence="1">
    <location>
        <position position="307"/>
    </location>
    <ligand>
        <name>FAD</name>
        <dbReference type="ChEBI" id="CHEBI:57692"/>
    </ligand>
</feature>
<feature type="binding site" evidence="1">
    <location>
        <position position="348"/>
    </location>
    <ligand>
        <name>FAD</name>
        <dbReference type="ChEBI" id="CHEBI:57692"/>
    </ligand>
</feature>
<proteinExistence type="inferred from homology"/>
<name>FENR1_CUPTR</name>